<reference key="1">
    <citation type="submission" date="2004-05" db="EMBL/GenBank/DDBJ databases">
        <authorList>
            <consortium name="NIH - Xenopus Gene Collection (XGC) project"/>
        </authorList>
    </citation>
    <scope>NUCLEOTIDE SEQUENCE [LARGE SCALE MRNA]</scope>
    <source>
        <tissue>Oocyte</tissue>
    </source>
</reference>
<evidence type="ECO:0000250" key="1"/>
<evidence type="ECO:0000255" key="2"/>
<evidence type="ECO:0000256" key="3">
    <source>
        <dbReference type="SAM" id="MobiDB-lite"/>
    </source>
</evidence>
<evidence type="ECO:0000305" key="4"/>
<accession>Q6NRM7</accession>
<name>CHMP3_XENLA</name>
<comment type="function">
    <text evidence="1">Probable core component of the endosomal sorting required for transport complex III (ESCRT-III) which is involved in multivesicular bodies (MVBs) formation and sorting of endosomal cargo proteins into MVBs. MVBs contain intraluminal vesicles (ILVs) that are generated by invagination and scission from the limiting membrane of the endosome and mostly are delivered to lysosomes enabling degradation of membrane proteins, such as stimulated growth factor receptors, lysosomal enzymes and lipids. Involved in late stages of cytokinesis. Plays a role in endosomal sorting/trafficking of EGF receptor (By similarity).</text>
</comment>
<comment type="subunit">
    <text evidence="1">Probable core component of the endosomal sorting required for transport complex III (ESCRT-III). ESCRT-III components are thought to multimerize to form a flat lattice on the perimeter membrane of the endosome. Several assembly forms of ESCRT-III may exist that interact and act sequentially (By similarity).</text>
</comment>
<comment type="subcellular location">
    <subcellularLocation>
        <location evidence="1">Cytoplasm</location>
        <location evidence="1">Cytosol</location>
    </subcellularLocation>
    <subcellularLocation>
        <location evidence="1">Membrane</location>
        <topology evidence="1">Lipid-anchor</topology>
    </subcellularLocation>
    <subcellularLocation>
        <location evidence="1">Endosome</location>
    </subcellularLocation>
    <subcellularLocation>
        <location evidence="1">Late endosome membrane</location>
    </subcellularLocation>
</comment>
<comment type="similarity">
    <text evidence="4">Belongs to the SNF7 family.</text>
</comment>
<organism>
    <name type="scientific">Xenopus laevis</name>
    <name type="common">African clawed frog</name>
    <dbReference type="NCBI Taxonomy" id="8355"/>
    <lineage>
        <taxon>Eukaryota</taxon>
        <taxon>Metazoa</taxon>
        <taxon>Chordata</taxon>
        <taxon>Craniata</taxon>
        <taxon>Vertebrata</taxon>
        <taxon>Euteleostomi</taxon>
        <taxon>Amphibia</taxon>
        <taxon>Batrachia</taxon>
        <taxon>Anura</taxon>
        <taxon>Pipoidea</taxon>
        <taxon>Pipidae</taxon>
        <taxon>Xenopodinae</taxon>
        <taxon>Xenopus</taxon>
        <taxon>Xenopus</taxon>
    </lineage>
</organism>
<protein>
    <recommendedName>
        <fullName>Charged multivesicular body protein 3</fullName>
    </recommendedName>
    <alternativeName>
        <fullName>Chromatin-modifying protein 3</fullName>
    </alternativeName>
    <alternativeName>
        <fullName>Vacuolar protein-sorting-associated protein 24</fullName>
    </alternativeName>
</protein>
<proteinExistence type="evidence at transcript level"/>
<dbReference type="EMBL" id="BC070719">
    <property type="protein sequence ID" value="AAH70719.1"/>
    <property type="molecule type" value="mRNA"/>
</dbReference>
<dbReference type="RefSeq" id="NP_001084828.1">
    <property type="nucleotide sequence ID" value="NM_001091359.1"/>
</dbReference>
<dbReference type="SMR" id="Q6NRM7"/>
<dbReference type="DNASU" id="431872"/>
<dbReference type="AGR" id="Xenbase:XB-GENE-6251759"/>
<dbReference type="Xenbase" id="XB-GENE-6251759">
    <property type="gene designation" value="chmp3.S"/>
</dbReference>
<dbReference type="OMA" id="KILWEVT"/>
<dbReference type="OrthoDB" id="2329734at2759"/>
<dbReference type="Proteomes" id="UP000186698">
    <property type="component" value="Unplaced"/>
</dbReference>
<dbReference type="Bgee" id="431872">
    <property type="expression patterns" value="Expressed in testis and 19 other cell types or tissues"/>
</dbReference>
<dbReference type="GO" id="GO:0005829">
    <property type="term" value="C:cytosol"/>
    <property type="evidence" value="ECO:0007669"/>
    <property type="project" value="UniProtKB-SubCell"/>
</dbReference>
<dbReference type="GO" id="GO:0000815">
    <property type="term" value="C:ESCRT III complex"/>
    <property type="evidence" value="ECO:0000318"/>
    <property type="project" value="GO_Central"/>
</dbReference>
<dbReference type="GO" id="GO:0031902">
    <property type="term" value="C:late endosome membrane"/>
    <property type="evidence" value="ECO:0007669"/>
    <property type="project" value="UniProtKB-SubCell"/>
</dbReference>
<dbReference type="GO" id="GO:0005771">
    <property type="term" value="C:multivesicular body"/>
    <property type="evidence" value="ECO:0000318"/>
    <property type="project" value="GO_Central"/>
</dbReference>
<dbReference type="GO" id="GO:0032509">
    <property type="term" value="P:endosome transport via multivesicular body sorting pathway"/>
    <property type="evidence" value="ECO:0000318"/>
    <property type="project" value="GO_Central"/>
</dbReference>
<dbReference type="GO" id="GO:0045324">
    <property type="term" value="P:late endosome to vacuole transport"/>
    <property type="evidence" value="ECO:0000318"/>
    <property type="project" value="GO_Central"/>
</dbReference>
<dbReference type="GO" id="GO:0015031">
    <property type="term" value="P:protein transport"/>
    <property type="evidence" value="ECO:0000318"/>
    <property type="project" value="GO_Central"/>
</dbReference>
<dbReference type="Gene3D" id="6.10.140.1230">
    <property type="match status" value="1"/>
</dbReference>
<dbReference type="InterPro" id="IPR005024">
    <property type="entry name" value="Snf7_fam"/>
</dbReference>
<dbReference type="PANTHER" id="PTHR10476">
    <property type="entry name" value="CHARGED MULTIVESICULAR BODY PROTEIN"/>
    <property type="match status" value="1"/>
</dbReference>
<dbReference type="Pfam" id="PF03357">
    <property type="entry name" value="Snf7"/>
    <property type="match status" value="1"/>
</dbReference>
<keyword id="KW-0175">Coiled coil</keyword>
<keyword id="KW-0963">Cytoplasm</keyword>
<keyword id="KW-0967">Endosome</keyword>
<keyword id="KW-0449">Lipoprotein</keyword>
<keyword id="KW-0472">Membrane</keyword>
<keyword id="KW-0519">Myristate</keyword>
<keyword id="KW-0653">Protein transport</keyword>
<keyword id="KW-1185">Reference proteome</keyword>
<keyword id="KW-0813">Transport</keyword>
<sequence length="220" mass="24882">MGLFGKTQERPPKDLVNEWSLKIRKEMRVIDRQIRDIQREQEKVKRSIKESAKKGNREACVILAKEVVQSKKAVNKLYASKAHMNSVLMSMKNQLAVLRVSGSLQKSTEVMKAMQNLVKLPEIQATMRELSKEMMKAGIIEEMLEDTFEGMEDQDEMEEQAEMEIDRILFEVTAGALGKAPSKVTDALPEPEITGAMAASDEEEEEDLEAMHSRLAALRS</sequence>
<feature type="initiator methionine" description="Removed" evidence="2">
    <location>
        <position position="1"/>
    </location>
</feature>
<feature type="chain" id="PRO_0000211485" description="Charged multivesicular body protein 3">
    <location>
        <begin position="2"/>
        <end position="220"/>
    </location>
</feature>
<feature type="region of interest" description="Important for autoinhibitory function" evidence="1">
    <location>
        <begin position="168"/>
        <end position="169"/>
    </location>
</feature>
<feature type="region of interest" description="Disordered" evidence="3">
    <location>
        <begin position="181"/>
        <end position="220"/>
    </location>
</feature>
<feature type="region of interest" description="Interaction with STAMBP" evidence="1">
    <location>
        <begin position="203"/>
        <end position="207"/>
    </location>
</feature>
<feature type="region of interest" description="Interaction with STAMBP" evidence="1">
    <location>
        <begin position="219"/>
        <end position="220"/>
    </location>
</feature>
<feature type="coiled-coil region" evidence="2">
    <location>
        <begin position="22"/>
        <end position="54"/>
    </location>
</feature>
<feature type="short sequence motif" description="MIT-interacting motif">
    <location>
        <begin position="201"/>
        <end position="209"/>
    </location>
</feature>
<feature type="site" description="Interaction with STAMBP" evidence="1">
    <location>
        <position position="214"/>
    </location>
</feature>
<feature type="lipid moiety-binding region" description="N-myristoyl glycine" evidence="2">
    <location>
        <position position="2"/>
    </location>
</feature>
<gene>
    <name type="primary">chmp3</name>
    <name type="synonym">vps24</name>
</gene>